<accession>Q9ZEJ6</accession>
<gene>
    <name type="primary">dnaK1</name>
    <name type="synonym">dnaK</name>
    <name type="ordered locus">alr2990</name>
</gene>
<feature type="chain" id="PRO_0000078407" description="Chaperone protein dnaK1">
    <location>
        <begin position="1"/>
        <end position="688"/>
    </location>
</feature>
<feature type="region of interest" description="Disordered" evidence="2">
    <location>
        <begin position="630"/>
        <end position="688"/>
    </location>
</feature>
<feature type="compositionally biased region" description="Basic and acidic residues" evidence="2">
    <location>
        <begin position="630"/>
        <end position="661"/>
    </location>
</feature>
<feature type="modified residue" description="Phosphothreonine; by autocatalysis" evidence="1">
    <location>
        <position position="198"/>
    </location>
</feature>
<feature type="sequence conflict" description="In Ref. 1; CAA10744." evidence="3" ref="1">
    <original>MEAA</original>
    <variation>HGRRR</variation>
    <location>
        <begin position="258"/>
        <end position="261"/>
    </location>
</feature>
<feature type="sequence conflict" description="In Ref. 1; CAA10744." evidence="3" ref="1">
    <original>C</original>
    <variation>Q</variation>
    <location>
        <position position="304"/>
    </location>
</feature>
<feature type="sequence conflict" description="In Ref. 1; CAA10744." evidence="3" ref="1">
    <original>N</original>
    <variation>D</variation>
    <location>
        <position position="361"/>
    </location>
</feature>
<feature type="sequence conflict" description="In Ref. 1; CAA10744." evidence="3" ref="1">
    <original>I</original>
    <variation>N</variation>
    <location>
        <position position="376"/>
    </location>
</feature>
<feature type="sequence conflict" description="In Ref. 1; CAA10744." evidence="3" ref="1">
    <original>N</original>
    <variation>D</variation>
    <location>
        <position position="508"/>
    </location>
</feature>
<evidence type="ECO:0000250" key="1"/>
<evidence type="ECO:0000256" key="2">
    <source>
        <dbReference type="SAM" id="MobiDB-lite"/>
    </source>
</evidence>
<evidence type="ECO:0000305" key="3"/>
<dbReference type="EMBL" id="AJ132707">
    <property type="protein sequence ID" value="CAA10744.1"/>
    <property type="molecule type" value="Genomic_DNA"/>
</dbReference>
<dbReference type="EMBL" id="BA000019">
    <property type="protein sequence ID" value="BAB74689.1"/>
    <property type="molecule type" value="Genomic_DNA"/>
</dbReference>
<dbReference type="PIR" id="AG2179">
    <property type="entry name" value="AG2179"/>
</dbReference>
<dbReference type="RefSeq" id="WP_010997141.1">
    <property type="nucleotide sequence ID" value="NZ_RSCN01000003.1"/>
</dbReference>
<dbReference type="SMR" id="Q9ZEJ6"/>
<dbReference type="STRING" id="103690.gene:10495026"/>
<dbReference type="KEGG" id="ana:alr2990"/>
<dbReference type="eggNOG" id="COG0443">
    <property type="taxonomic scope" value="Bacteria"/>
</dbReference>
<dbReference type="OrthoDB" id="5410377at2"/>
<dbReference type="Proteomes" id="UP000002483">
    <property type="component" value="Chromosome"/>
</dbReference>
<dbReference type="GO" id="GO:0005524">
    <property type="term" value="F:ATP binding"/>
    <property type="evidence" value="ECO:0007669"/>
    <property type="project" value="UniProtKB-UniRule"/>
</dbReference>
<dbReference type="GO" id="GO:0140662">
    <property type="term" value="F:ATP-dependent protein folding chaperone"/>
    <property type="evidence" value="ECO:0007669"/>
    <property type="project" value="InterPro"/>
</dbReference>
<dbReference type="GO" id="GO:0051082">
    <property type="term" value="F:unfolded protein binding"/>
    <property type="evidence" value="ECO:0007669"/>
    <property type="project" value="InterPro"/>
</dbReference>
<dbReference type="CDD" id="cd10234">
    <property type="entry name" value="ASKHA_NBD_HSP70_DnaK-like"/>
    <property type="match status" value="1"/>
</dbReference>
<dbReference type="FunFam" id="2.60.34.10:FF:000014">
    <property type="entry name" value="Chaperone protein DnaK HSP70"/>
    <property type="match status" value="1"/>
</dbReference>
<dbReference type="FunFam" id="3.30.420.40:FF:000004">
    <property type="entry name" value="Molecular chaperone DnaK"/>
    <property type="match status" value="1"/>
</dbReference>
<dbReference type="FunFam" id="3.90.640.10:FF:000003">
    <property type="entry name" value="Molecular chaperone DnaK"/>
    <property type="match status" value="1"/>
</dbReference>
<dbReference type="Gene3D" id="3.30.420.40">
    <property type="match status" value="2"/>
</dbReference>
<dbReference type="Gene3D" id="3.90.640.10">
    <property type="entry name" value="Actin, Chain A, domain 4"/>
    <property type="match status" value="1"/>
</dbReference>
<dbReference type="Gene3D" id="2.60.34.10">
    <property type="entry name" value="Substrate Binding Domain Of DNAk, Chain A, domain 1"/>
    <property type="match status" value="1"/>
</dbReference>
<dbReference type="HAMAP" id="MF_00332">
    <property type="entry name" value="DnaK"/>
    <property type="match status" value="1"/>
</dbReference>
<dbReference type="InterPro" id="IPR043129">
    <property type="entry name" value="ATPase_NBD"/>
</dbReference>
<dbReference type="InterPro" id="IPR012725">
    <property type="entry name" value="Chaperone_DnaK"/>
</dbReference>
<dbReference type="InterPro" id="IPR018181">
    <property type="entry name" value="Heat_shock_70_CS"/>
</dbReference>
<dbReference type="InterPro" id="IPR029047">
    <property type="entry name" value="HSP70_peptide-bd_sf"/>
</dbReference>
<dbReference type="InterPro" id="IPR013126">
    <property type="entry name" value="Hsp_70_fam"/>
</dbReference>
<dbReference type="NCBIfam" id="NF001413">
    <property type="entry name" value="PRK00290.1"/>
    <property type="match status" value="1"/>
</dbReference>
<dbReference type="NCBIfam" id="NF003520">
    <property type="entry name" value="PRK05183.1"/>
    <property type="match status" value="1"/>
</dbReference>
<dbReference type="NCBIfam" id="NF009946">
    <property type="entry name" value="PRK13410.1"/>
    <property type="match status" value="1"/>
</dbReference>
<dbReference type="NCBIfam" id="TIGR02350">
    <property type="entry name" value="prok_dnaK"/>
    <property type="match status" value="1"/>
</dbReference>
<dbReference type="PANTHER" id="PTHR19375">
    <property type="entry name" value="HEAT SHOCK PROTEIN 70KDA"/>
    <property type="match status" value="1"/>
</dbReference>
<dbReference type="Pfam" id="PF00012">
    <property type="entry name" value="HSP70"/>
    <property type="match status" value="1"/>
</dbReference>
<dbReference type="PRINTS" id="PR00301">
    <property type="entry name" value="HEATSHOCK70"/>
</dbReference>
<dbReference type="SUPFAM" id="SSF53067">
    <property type="entry name" value="Actin-like ATPase domain"/>
    <property type="match status" value="2"/>
</dbReference>
<dbReference type="SUPFAM" id="SSF100920">
    <property type="entry name" value="Heat shock protein 70kD (HSP70), peptide-binding domain"/>
    <property type="match status" value="1"/>
</dbReference>
<dbReference type="PROSITE" id="PS00297">
    <property type="entry name" value="HSP70_1"/>
    <property type="match status" value="1"/>
</dbReference>
<dbReference type="PROSITE" id="PS00329">
    <property type="entry name" value="HSP70_2"/>
    <property type="match status" value="1"/>
</dbReference>
<dbReference type="PROSITE" id="PS01036">
    <property type="entry name" value="HSP70_3"/>
    <property type="match status" value="1"/>
</dbReference>
<comment type="function">
    <text evidence="1">Acts as a chaperone.</text>
</comment>
<comment type="induction">
    <text evidence="1">By stress conditions e.g. heat shock (By similarity).</text>
</comment>
<comment type="similarity">
    <text evidence="3">Belongs to the heat shock protein 70 family.</text>
</comment>
<protein>
    <recommendedName>
        <fullName>Chaperone protein dnaK1</fullName>
    </recommendedName>
    <alternativeName>
        <fullName>HSP70-1</fullName>
    </alternativeName>
    <alternativeName>
        <fullName>Heat shock 70 kDa protein 1</fullName>
    </alternativeName>
    <alternativeName>
        <fullName>Heat shock protein 70-1</fullName>
    </alternativeName>
</protein>
<reference key="1">
    <citation type="thesis" date="1999" institute="University of Bonn" country="Germany">
        <authorList>
            <person name="Pohl B."/>
        </authorList>
    </citation>
    <scope>NUCLEOTIDE SEQUENCE [GENOMIC DNA]</scope>
</reference>
<reference key="2">
    <citation type="journal article" date="2001" name="DNA Res.">
        <title>Complete genomic sequence of the filamentous nitrogen-fixing cyanobacterium Anabaena sp. strain PCC 7120.</title>
        <authorList>
            <person name="Kaneko T."/>
            <person name="Nakamura Y."/>
            <person name="Wolk C.P."/>
            <person name="Kuritz T."/>
            <person name="Sasamoto S."/>
            <person name="Watanabe A."/>
            <person name="Iriguchi M."/>
            <person name="Ishikawa A."/>
            <person name="Kawashima K."/>
            <person name="Kimura T."/>
            <person name="Kishida Y."/>
            <person name="Kohara M."/>
            <person name="Matsumoto M."/>
            <person name="Matsuno A."/>
            <person name="Muraki A."/>
            <person name="Nakazaki N."/>
            <person name="Shimpo S."/>
            <person name="Sugimoto M."/>
            <person name="Takazawa M."/>
            <person name="Yamada M."/>
            <person name="Yasuda M."/>
            <person name="Tabata S."/>
        </authorList>
    </citation>
    <scope>NUCLEOTIDE SEQUENCE [LARGE SCALE GENOMIC DNA]</scope>
    <source>
        <strain>PCC 7120 / SAG 25.82 / UTEX 2576</strain>
    </source>
</reference>
<keyword id="KW-0067">ATP-binding</keyword>
<keyword id="KW-0143">Chaperone</keyword>
<keyword id="KW-0547">Nucleotide-binding</keyword>
<keyword id="KW-0597">Phosphoprotein</keyword>
<keyword id="KW-1185">Reference proteome</keyword>
<keyword id="KW-0346">Stress response</keyword>
<name>DNAK1_NOSS1</name>
<organism>
    <name type="scientific">Nostoc sp. (strain PCC 7120 / SAG 25.82 / UTEX 2576)</name>
    <dbReference type="NCBI Taxonomy" id="103690"/>
    <lineage>
        <taxon>Bacteria</taxon>
        <taxon>Bacillati</taxon>
        <taxon>Cyanobacteriota</taxon>
        <taxon>Cyanophyceae</taxon>
        <taxon>Nostocales</taxon>
        <taxon>Nostocaceae</taxon>
        <taxon>Nostoc</taxon>
    </lineage>
</organism>
<proteinExistence type="inferred from homology"/>
<sequence>MGKVVGIDLGTTNSVVAVMEGGKPVVIANAEGMRTTPSVVGFSKDGERVVGQMARRQTVLNPQNTFFAVKRYIGRRYNELSPESKRVPYTIRKDEVGNIKVACPRLNKEFSAEEISAMVLKKLADDASAYLGSAVTGAVITVPAYFNDSQRQATRDAGRIAGLEVLRILNEPTAASLAYGLDRGDTETILVFDLGGGTFDVSILEVGDGVFEVKATSGDTQLGGNDFDKKIVDWLAEQFLETEGVDLRRDRQALQRLMEAAEKAKIELSAVSITDINLPFITATEDGPKHLETRLTRSQFEGLCVDLLGRVRNPVKRALKDAGLRPDDIEEVVLVGGSTRMPMVKQLVRDLIGIEPSENVNPDEVVAMGAAIQAGILAGEFKDVLLLDVTPLSLGLEAIGGVMKKLIPRNTTIPVRRSDIFSTSENNQNSVEIHVVQGEREMAGDNKSLGRFKLYGIPPAPRGIPQIQVAFDIDANGILQVTALDRTTGREQSITIQGASTLSESEVNRMIQEAQKYADVDRERKERVEKRTRSEALILQGERQLREVALEFGMQFARNRRQRIDNISRELKESLKENDDRGIDQAYADLQDALYELNREVRQYYAEDEDDDLFATIKDIFVGDKDKERDLPRDSYRERDAYNNRDYGRDYGRDYGRDSRPSYDNSRPPRKSPRPSYQDNWDDDDDWL</sequence>